<name>UBIG_SHEPC</name>
<gene>
    <name evidence="1" type="primary">ubiG</name>
    <name type="ordered locus">Sputcn32_2071</name>
</gene>
<sequence>MQHNTNVDPQEIAKFERMAETWWDLNGEFKPLHLLNPLRLNYIDQTAGGIFGKKVLDVGCGGGILSESMARIGAEVDGLDMGEEPLEVARLHALETGVNITYVKNTAEAHSQDHQGYYDVVTCMEMLEHVPNPQSVIKACCDMVKPGGFVFFSTINRNLRSYVETILGAEYLLKMLPVGTHDHNKFIKPSELIELVDNTDLICKDAVGITYNPLTGIFKYTPRVDVNYMIATQKVD</sequence>
<feature type="chain" id="PRO_1000013923" description="Ubiquinone biosynthesis O-methyltransferase">
    <location>
        <begin position="1"/>
        <end position="236"/>
    </location>
</feature>
<feature type="binding site" evidence="1">
    <location>
        <position position="39"/>
    </location>
    <ligand>
        <name>S-adenosyl-L-methionine</name>
        <dbReference type="ChEBI" id="CHEBI:59789"/>
    </ligand>
</feature>
<feature type="binding site" evidence="1">
    <location>
        <position position="59"/>
    </location>
    <ligand>
        <name>S-adenosyl-L-methionine</name>
        <dbReference type="ChEBI" id="CHEBI:59789"/>
    </ligand>
</feature>
<feature type="binding site" evidence="1">
    <location>
        <position position="80"/>
    </location>
    <ligand>
        <name>S-adenosyl-L-methionine</name>
        <dbReference type="ChEBI" id="CHEBI:59789"/>
    </ligand>
</feature>
<feature type="binding site" evidence="1">
    <location>
        <position position="124"/>
    </location>
    <ligand>
        <name>S-adenosyl-L-methionine</name>
        <dbReference type="ChEBI" id="CHEBI:59789"/>
    </ligand>
</feature>
<protein>
    <recommendedName>
        <fullName evidence="1">Ubiquinone biosynthesis O-methyltransferase</fullName>
    </recommendedName>
    <alternativeName>
        <fullName evidence="1">2-polyprenyl-6-hydroxyphenol methylase</fullName>
        <ecNumber evidence="1">2.1.1.222</ecNumber>
    </alternativeName>
    <alternativeName>
        <fullName evidence="1">3-demethylubiquinone 3-O-methyltransferase</fullName>
        <ecNumber evidence="1">2.1.1.64</ecNumber>
    </alternativeName>
</protein>
<dbReference type="EC" id="2.1.1.222" evidence="1"/>
<dbReference type="EC" id="2.1.1.64" evidence="1"/>
<dbReference type="EMBL" id="CP000681">
    <property type="protein sequence ID" value="ABP75792.1"/>
    <property type="molecule type" value="Genomic_DNA"/>
</dbReference>
<dbReference type="SMR" id="A4Y759"/>
<dbReference type="STRING" id="319224.Sputcn32_2071"/>
<dbReference type="KEGG" id="spc:Sputcn32_2071"/>
<dbReference type="eggNOG" id="COG2227">
    <property type="taxonomic scope" value="Bacteria"/>
</dbReference>
<dbReference type="HOGENOM" id="CLU_042432_5_0_6"/>
<dbReference type="UniPathway" id="UPA00232"/>
<dbReference type="GO" id="GO:0102208">
    <property type="term" value="F:2-polyprenyl-6-hydroxyphenol methylase activity"/>
    <property type="evidence" value="ECO:0007669"/>
    <property type="project" value="UniProtKB-EC"/>
</dbReference>
<dbReference type="GO" id="GO:0061542">
    <property type="term" value="F:3-demethylubiquinol 3-O-methyltransferase activity"/>
    <property type="evidence" value="ECO:0007669"/>
    <property type="project" value="UniProtKB-UniRule"/>
</dbReference>
<dbReference type="GO" id="GO:0010420">
    <property type="term" value="F:polyprenyldihydroxybenzoate methyltransferase activity"/>
    <property type="evidence" value="ECO:0007669"/>
    <property type="project" value="InterPro"/>
</dbReference>
<dbReference type="GO" id="GO:0032259">
    <property type="term" value="P:methylation"/>
    <property type="evidence" value="ECO:0007669"/>
    <property type="project" value="UniProtKB-KW"/>
</dbReference>
<dbReference type="CDD" id="cd02440">
    <property type="entry name" value="AdoMet_MTases"/>
    <property type="match status" value="1"/>
</dbReference>
<dbReference type="FunFam" id="3.40.50.150:FF:000028">
    <property type="entry name" value="Ubiquinone biosynthesis O-methyltransferase"/>
    <property type="match status" value="1"/>
</dbReference>
<dbReference type="Gene3D" id="3.40.50.150">
    <property type="entry name" value="Vaccinia Virus protein VP39"/>
    <property type="match status" value="1"/>
</dbReference>
<dbReference type="HAMAP" id="MF_00472">
    <property type="entry name" value="UbiG"/>
    <property type="match status" value="1"/>
</dbReference>
<dbReference type="InterPro" id="IPR029063">
    <property type="entry name" value="SAM-dependent_MTases_sf"/>
</dbReference>
<dbReference type="InterPro" id="IPR010233">
    <property type="entry name" value="UbiG_MeTrfase"/>
</dbReference>
<dbReference type="NCBIfam" id="TIGR01983">
    <property type="entry name" value="UbiG"/>
    <property type="match status" value="1"/>
</dbReference>
<dbReference type="PANTHER" id="PTHR43464">
    <property type="entry name" value="METHYLTRANSFERASE"/>
    <property type="match status" value="1"/>
</dbReference>
<dbReference type="PANTHER" id="PTHR43464:SF19">
    <property type="entry name" value="UBIQUINONE BIOSYNTHESIS O-METHYLTRANSFERASE, MITOCHONDRIAL"/>
    <property type="match status" value="1"/>
</dbReference>
<dbReference type="Pfam" id="PF13489">
    <property type="entry name" value="Methyltransf_23"/>
    <property type="match status" value="1"/>
</dbReference>
<dbReference type="SUPFAM" id="SSF53335">
    <property type="entry name" value="S-adenosyl-L-methionine-dependent methyltransferases"/>
    <property type="match status" value="1"/>
</dbReference>
<keyword id="KW-0489">Methyltransferase</keyword>
<keyword id="KW-0949">S-adenosyl-L-methionine</keyword>
<keyword id="KW-0808">Transferase</keyword>
<keyword id="KW-0831">Ubiquinone biosynthesis</keyword>
<evidence type="ECO:0000255" key="1">
    <source>
        <dbReference type="HAMAP-Rule" id="MF_00472"/>
    </source>
</evidence>
<reference key="1">
    <citation type="submission" date="2007-04" db="EMBL/GenBank/DDBJ databases">
        <title>Complete sequence of Shewanella putrefaciens CN-32.</title>
        <authorList>
            <consortium name="US DOE Joint Genome Institute"/>
            <person name="Copeland A."/>
            <person name="Lucas S."/>
            <person name="Lapidus A."/>
            <person name="Barry K."/>
            <person name="Detter J.C."/>
            <person name="Glavina del Rio T."/>
            <person name="Hammon N."/>
            <person name="Israni S."/>
            <person name="Dalin E."/>
            <person name="Tice H."/>
            <person name="Pitluck S."/>
            <person name="Chain P."/>
            <person name="Malfatti S."/>
            <person name="Shin M."/>
            <person name="Vergez L."/>
            <person name="Schmutz J."/>
            <person name="Larimer F."/>
            <person name="Land M."/>
            <person name="Hauser L."/>
            <person name="Kyrpides N."/>
            <person name="Mikhailova N."/>
            <person name="Romine M.F."/>
            <person name="Fredrickson J."/>
            <person name="Tiedje J."/>
            <person name="Richardson P."/>
        </authorList>
    </citation>
    <scope>NUCLEOTIDE SEQUENCE [LARGE SCALE GENOMIC DNA]</scope>
    <source>
        <strain>CN-32 / ATCC BAA-453</strain>
    </source>
</reference>
<proteinExistence type="inferred from homology"/>
<organism>
    <name type="scientific">Shewanella putrefaciens (strain CN-32 / ATCC BAA-453)</name>
    <dbReference type="NCBI Taxonomy" id="319224"/>
    <lineage>
        <taxon>Bacteria</taxon>
        <taxon>Pseudomonadati</taxon>
        <taxon>Pseudomonadota</taxon>
        <taxon>Gammaproteobacteria</taxon>
        <taxon>Alteromonadales</taxon>
        <taxon>Shewanellaceae</taxon>
        <taxon>Shewanella</taxon>
    </lineage>
</organism>
<comment type="function">
    <text evidence="1">O-methyltransferase that catalyzes the 2 O-methylation steps in the ubiquinone biosynthetic pathway.</text>
</comment>
<comment type="catalytic activity">
    <reaction evidence="1">
        <text>a 3-demethylubiquinol + S-adenosyl-L-methionine = a ubiquinol + S-adenosyl-L-homocysteine + H(+)</text>
        <dbReference type="Rhea" id="RHEA:44380"/>
        <dbReference type="Rhea" id="RHEA-COMP:9566"/>
        <dbReference type="Rhea" id="RHEA-COMP:10914"/>
        <dbReference type="ChEBI" id="CHEBI:15378"/>
        <dbReference type="ChEBI" id="CHEBI:17976"/>
        <dbReference type="ChEBI" id="CHEBI:57856"/>
        <dbReference type="ChEBI" id="CHEBI:59789"/>
        <dbReference type="ChEBI" id="CHEBI:84422"/>
        <dbReference type="EC" id="2.1.1.64"/>
    </reaction>
</comment>
<comment type="catalytic activity">
    <reaction evidence="1">
        <text>a 3-(all-trans-polyprenyl)benzene-1,2-diol + S-adenosyl-L-methionine = a 2-methoxy-6-(all-trans-polyprenyl)phenol + S-adenosyl-L-homocysteine + H(+)</text>
        <dbReference type="Rhea" id="RHEA:31411"/>
        <dbReference type="Rhea" id="RHEA-COMP:9550"/>
        <dbReference type="Rhea" id="RHEA-COMP:9551"/>
        <dbReference type="ChEBI" id="CHEBI:15378"/>
        <dbReference type="ChEBI" id="CHEBI:57856"/>
        <dbReference type="ChEBI" id="CHEBI:59789"/>
        <dbReference type="ChEBI" id="CHEBI:62729"/>
        <dbReference type="ChEBI" id="CHEBI:62731"/>
        <dbReference type="EC" id="2.1.1.222"/>
    </reaction>
</comment>
<comment type="pathway">
    <text evidence="1">Cofactor biosynthesis; ubiquinone biosynthesis.</text>
</comment>
<comment type="similarity">
    <text evidence="1">Belongs to the methyltransferase superfamily. UbiG/COQ3 family.</text>
</comment>
<accession>A4Y759</accession>